<evidence type="ECO:0000255" key="1">
    <source>
        <dbReference type="HAMAP-Rule" id="MF_00295"/>
    </source>
</evidence>
<evidence type="ECO:0000269" key="2">
    <source>
    </source>
</evidence>
<evidence type="ECO:0000303" key="3">
    <source>
    </source>
</evidence>
<evidence type="ECO:0000312" key="4">
    <source>
        <dbReference type="EMBL" id="AGI85388.1"/>
    </source>
</evidence>
<accession>M9SGV8</accession>
<sequence length="309" mass="35899">MPIKVPNDLPAATVLENENMFVMRENRAASQDIRPLDLLILNLMPTKVETEIQIMRLLSNSPLQVNVRLLQMSSHVSKNTSQEYLDRFYDRFDDVKSRKWDGMIITGAPVENIDFEEVDYWDELCQIMEWSKKNVFSTLHICWGAQAGLNYHYGIPKYPLESKMSGVFAHKAIVRDDPLLRGCDDIFWFPHSRHTEVRAEDIIRNPHLHIIAVSDEAGVGIVVSENSGQVFVTGHMEYDAKTLSYEYYRDLGKGMNPHIPYHYFPDDDPSKDPVMNWRSTANLIFTNWLNYYVYQRVPYDINEIGKDSE</sequence>
<reference key="1">
    <citation type="journal article" date="2012" name="J. Bacteriol.">
        <title>Genome sequence of 'Candidatus Methanomethylophilus alvus' Mx1201, a methanogenic archaeon from the human gut belonging to a seventh order of methanogens.</title>
        <authorList>
            <person name="Borrel G."/>
            <person name="Harris H.M."/>
            <person name="Tottey W."/>
            <person name="Mihajlovski A."/>
            <person name="Parisot N."/>
            <person name="Peyretaillade E."/>
            <person name="Peyret P."/>
            <person name="Gribaldo S."/>
            <person name="O'Toole P.W."/>
            <person name="Brugere J.F."/>
        </authorList>
    </citation>
    <scope>NUCLEOTIDE SEQUENCE [LARGE SCALE GENOMIC DNA]</scope>
    <source>
        <strain>Mx1201</strain>
    </source>
</reference>
<reference key="2">
    <citation type="journal article" date="2017" name="Nat. Chem. Biol.">
        <title>Parallel evolution of non-homologous isofunctional enzymes in methionine biosynthesis.</title>
        <authorList>
            <person name="Bastard K."/>
            <person name="Perret A."/>
            <person name="Mariage A."/>
            <person name="Bessonnet T."/>
            <person name="Pinet-Turpault A."/>
            <person name="Petit J.L."/>
            <person name="Darii E."/>
            <person name="Bazire P."/>
            <person name="Vergne-Vaxelaire C."/>
            <person name="Brewee C."/>
            <person name="Debard A."/>
            <person name="Pellouin V."/>
            <person name="Besnard-Gonnet M."/>
            <person name="Artiguenave F."/>
            <person name="Medigue C."/>
            <person name="Vallenet D."/>
            <person name="Danchin A."/>
            <person name="Zaparucha A."/>
            <person name="Weissenbach J."/>
            <person name="Salanoubat M."/>
            <person name="de Berardinis V."/>
        </authorList>
    </citation>
    <scope>FUNCTION</scope>
    <scope>CATALYTIC ACTIVITY</scope>
</reference>
<protein>
    <recommendedName>
        <fullName evidence="1">Homoserine O-acetyltransferase</fullName>
        <shortName evidence="1 3">HAT</shortName>
        <ecNumber evidence="1 2">2.3.1.31</ecNumber>
    </recommendedName>
    <alternativeName>
        <fullName evidence="1">Homoserine transacetylase</fullName>
        <shortName evidence="1">HTA</shortName>
    </alternativeName>
</protein>
<proteinExistence type="evidence at protein level"/>
<dbReference type="EC" id="2.3.1.31" evidence="1 2"/>
<dbReference type="EMBL" id="CP004049">
    <property type="protein sequence ID" value="AGI85388.1"/>
    <property type="molecule type" value="Genomic_DNA"/>
</dbReference>
<dbReference type="RefSeq" id="WP_015504536.1">
    <property type="nucleotide sequence ID" value="NC_020913.1"/>
</dbReference>
<dbReference type="SMR" id="M9SGV8"/>
<dbReference type="STRING" id="1236689.MMALV_06490"/>
<dbReference type="GeneID" id="41321438"/>
<dbReference type="KEGG" id="max:MMALV_06490"/>
<dbReference type="eggNOG" id="arCOG00090">
    <property type="taxonomic scope" value="Archaea"/>
</dbReference>
<dbReference type="HOGENOM" id="CLU_057851_0_1_2"/>
<dbReference type="InParanoid" id="M9SGV8"/>
<dbReference type="OrthoDB" id="52471at2157"/>
<dbReference type="UniPathway" id="UPA00051">
    <property type="reaction ID" value="UER00074"/>
</dbReference>
<dbReference type="Proteomes" id="UP000012672">
    <property type="component" value="Chromosome"/>
</dbReference>
<dbReference type="GO" id="GO:0005737">
    <property type="term" value="C:cytoplasm"/>
    <property type="evidence" value="ECO:0007669"/>
    <property type="project" value="UniProtKB-SubCell"/>
</dbReference>
<dbReference type="GO" id="GO:0004414">
    <property type="term" value="F:homoserine O-acetyltransferase activity"/>
    <property type="evidence" value="ECO:0007669"/>
    <property type="project" value="UniProtKB-EC"/>
</dbReference>
<dbReference type="GO" id="GO:0008899">
    <property type="term" value="F:homoserine O-succinyltransferase activity"/>
    <property type="evidence" value="ECO:0007669"/>
    <property type="project" value="InterPro"/>
</dbReference>
<dbReference type="GO" id="GO:0009086">
    <property type="term" value="P:methionine biosynthetic process"/>
    <property type="evidence" value="ECO:0007669"/>
    <property type="project" value="UniProtKB-KW"/>
</dbReference>
<dbReference type="CDD" id="cd03131">
    <property type="entry name" value="GATase1_HTS"/>
    <property type="match status" value="1"/>
</dbReference>
<dbReference type="FunFam" id="3.40.50.880:FF:000004">
    <property type="entry name" value="Homoserine O-succinyltransferase"/>
    <property type="match status" value="1"/>
</dbReference>
<dbReference type="Gene3D" id="3.40.50.880">
    <property type="match status" value="1"/>
</dbReference>
<dbReference type="HAMAP" id="MF_00295">
    <property type="entry name" value="MetA_acyltransf"/>
    <property type="match status" value="1"/>
</dbReference>
<dbReference type="InterPro" id="IPR029062">
    <property type="entry name" value="Class_I_gatase-like"/>
</dbReference>
<dbReference type="InterPro" id="IPR005697">
    <property type="entry name" value="HST_MetA"/>
</dbReference>
<dbReference type="InterPro" id="IPR033752">
    <property type="entry name" value="MetA_family"/>
</dbReference>
<dbReference type="NCBIfam" id="TIGR01001">
    <property type="entry name" value="metA"/>
    <property type="match status" value="1"/>
</dbReference>
<dbReference type="PANTHER" id="PTHR20919">
    <property type="entry name" value="HOMOSERINE O-SUCCINYLTRANSFERASE"/>
    <property type="match status" value="1"/>
</dbReference>
<dbReference type="PANTHER" id="PTHR20919:SF0">
    <property type="entry name" value="HOMOSERINE O-SUCCINYLTRANSFERASE"/>
    <property type="match status" value="1"/>
</dbReference>
<dbReference type="Pfam" id="PF04204">
    <property type="entry name" value="HTS"/>
    <property type="match status" value="1"/>
</dbReference>
<dbReference type="PIRSF" id="PIRSF000450">
    <property type="entry name" value="H_ser_succinyltr"/>
    <property type="match status" value="1"/>
</dbReference>
<dbReference type="SUPFAM" id="SSF52317">
    <property type="entry name" value="Class I glutamine amidotransferase-like"/>
    <property type="match status" value="1"/>
</dbReference>
<feature type="chain" id="PRO_0000440344" description="Homoserine O-acetyltransferase">
    <location>
        <begin position="1"/>
        <end position="309"/>
    </location>
</feature>
<feature type="active site" description="Acyl-thioester intermediate" evidence="1">
    <location>
        <position position="142"/>
    </location>
</feature>
<feature type="active site" description="Proton acceptor" evidence="1">
    <location>
        <position position="235"/>
    </location>
</feature>
<feature type="active site" evidence="1">
    <location>
        <position position="237"/>
    </location>
</feature>
<feature type="binding site" evidence="1">
    <location>
        <position position="163"/>
    </location>
    <ligand>
        <name>substrate</name>
    </ligand>
</feature>
<feature type="binding site" evidence="1">
    <location>
        <position position="192"/>
    </location>
    <ligand>
        <name>substrate</name>
    </ligand>
</feature>
<feature type="binding site" evidence="1">
    <location>
        <position position="249"/>
    </location>
    <ligand>
        <name>substrate</name>
    </ligand>
</feature>
<feature type="site" description="Important for acyl-CoA specificity" evidence="1">
    <location>
        <position position="111"/>
    </location>
</feature>
<feature type="site" description="Important for substrate specificity" evidence="1">
    <location>
        <position position="192"/>
    </location>
</feature>
<gene>
    <name evidence="1 3" type="primary">metAA</name>
    <name evidence="4" type="ORF">MMALV_06490</name>
</gene>
<organism>
    <name type="scientific">Methanomethylophilus alvi (strain Mx1201)</name>
    <dbReference type="NCBI Taxonomy" id="1236689"/>
    <lineage>
        <taxon>Archaea</taxon>
        <taxon>Methanobacteriati</taxon>
        <taxon>Thermoplasmatota</taxon>
        <taxon>Thermoplasmata</taxon>
        <taxon>Methanomassiliicoccales</taxon>
        <taxon>Methanomethylophilaceae</taxon>
        <taxon>Methanomethylophilus</taxon>
    </lineage>
</organism>
<comment type="function">
    <text evidence="1 2">Transfers an acetyl group from acetyl-CoA to L-homoserine, forming acetyl-L-homoserine.</text>
</comment>
<comment type="catalytic activity">
    <reaction evidence="1 2">
        <text>L-homoserine + acetyl-CoA = O-acetyl-L-homoserine + CoA</text>
        <dbReference type="Rhea" id="RHEA:13701"/>
        <dbReference type="ChEBI" id="CHEBI:57287"/>
        <dbReference type="ChEBI" id="CHEBI:57288"/>
        <dbReference type="ChEBI" id="CHEBI:57476"/>
        <dbReference type="ChEBI" id="CHEBI:57716"/>
        <dbReference type="EC" id="2.3.1.31"/>
    </reaction>
</comment>
<comment type="pathway">
    <text evidence="1">Amino-acid biosynthesis; L-methionine biosynthesis via de novo pathway; O-acetyl-L-homoserine from L-homoserine: step 1/1.</text>
</comment>
<comment type="subcellular location">
    <subcellularLocation>
        <location evidence="1">Cytoplasm</location>
    </subcellularLocation>
</comment>
<comment type="similarity">
    <text evidence="1">Belongs to the MetA family.</text>
</comment>
<keyword id="KW-0012">Acyltransferase</keyword>
<keyword id="KW-0028">Amino-acid biosynthesis</keyword>
<keyword id="KW-0963">Cytoplasm</keyword>
<keyword id="KW-0486">Methionine biosynthesis</keyword>
<keyword id="KW-1185">Reference proteome</keyword>
<keyword id="KW-0808">Transferase</keyword>
<name>METAA_METAX</name>